<reference key="1">
    <citation type="journal article" date="2004" name="Proc. Natl. Acad. Sci. U.S.A.">
        <title>Genome sequence of the enterobacterial phytopathogen Erwinia carotovora subsp. atroseptica and characterization of virulence factors.</title>
        <authorList>
            <person name="Bell K.S."/>
            <person name="Sebaihia M."/>
            <person name="Pritchard L."/>
            <person name="Holden M.T.G."/>
            <person name="Hyman L.J."/>
            <person name="Holeva M.C."/>
            <person name="Thomson N.R."/>
            <person name="Bentley S.D."/>
            <person name="Churcher L.J.C."/>
            <person name="Mungall K."/>
            <person name="Atkin R."/>
            <person name="Bason N."/>
            <person name="Brooks K."/>
            <person name="Chillingworth T."/>
            <person name="Clark K."/>
            <person name="Doggett J."/>
            <person name="Fraser A."/>
            <person name="Hance Z."/>
            <person name="Hauser H."/>
            <person name="Jagels K."/>
            <person name="Moule S."/>
            <person name="Norbertczak H."/>
            <person name="Ormond D."/>
            <person name="Price C."/>
            <person name="Quail M.A."/>
            <person name="Sanders M."/>
            <person name="Walker D."/>
            <person name="Whitehead S."/>
            <person name="Salmond G.P.C."/>
            <person name="Birch P.R.J."/>
            <person name="Parkhill J."/>
            <person name="Toth I.K."/>
        </authorList>
    </citation>
    <scope>NUCLEOTIDE SEQUENCE [LARGE SCALE GENOMIC DNA]</scope>
    <source>
        <strain>SCRI 1043 / ATCC BAA-672</strain>
    </source>
</reference>
<proteinExistence type="inferred from homology"/>
<dbReference type="EC" id="2.1.1.-" evidence="1"/>
<dbReference type="EMBL" id="BX950851">
    <property type="protein sequence ID" value="CAG73178.1"/>
    <property type="molecule type" value="Genomic_DNA"/>
</dbReference>
<dbReference type="RefSeq" id="WP_011091893.1">
    <property type="nucleotide sequence ID" value="NC_004547.2"/>
</dbReference>
<dbReference type="SMR" id="Q6DAJ5"/>
<dbReference type="STRING" id="218491.ECA0258"/>
<dbReference type="GeneID" id="57207130"/>
<dbReference type="KEGG" id="eca:ECA0258"/>
<dbReference type="PATRIC" id="fig|218491.5.peg.259"/>
<dbReference type="eggNOG" id="COG2264">
    <property type="taxonomic scope" value="Bacteria"/>
</dbReference>
<dbReference type="HOGENOM" id="CLU_049382_4_1_6"/>
<dbReference type="OrthoDB" id="9785995at2"/>
<dbReference type="Proteomes" id="UP000007966">
    <property type="component" value="Chromosome"/>
</dbReference>
<dbReference type="GO" id="GO:0005829">
    <property type="term" value="C:cytosol"/>
    <property type="evidence" value="ECO:0007669"/>
    <property type="project" value="TreeGrafter"/>
</dbReference>
<dbReference type="GO" id="GO:0016279">
    <property type="term" value="F:protein-lysine N-methyltransferase activity"/>
    <property type="evidence" value="ECO:0007669"/>
    <property type="project" value="TreeGrafter"/>
</dbReference>
<dbReference type="GO" id="GO:0032259">
    <property type="term" value="P:methylation"/>
    <property type="evidence" value="ECO:0007669"/>
    <property type="project" value="UniProtKB-KW"/>
</dbReference>
<dbReference type="CDD" id="cd02440">
    <property type="entry name" value="AdoMet_MTases"/>
    <property type="match status" value="1"/>
</dbReference>
<dbReference type="Gene3D" id="3.40.50.150">
    <property type="entry name" value="Vaccinia Virus protein VP39"/>
    <property type="match status" value="1"/>
</dbReference>
<dbReference type="HAMAP" id="MF_00735">
    <property type="entry name" value="Methyltr_PrmA"/>
    <property type="match status" value="1"/>
</dbReference>
<dbReference type="InterPro" id="IPR050078">
    <property type="entry name" value="Ribosomal_L11_MeTrfase_PrmA"/>
</dbReference>
<dbReference type="InterPro" id="IPR004498">
    <property type="entry name" value="Ribosomal_PrmA_MeTrfase"/>
</dbReference>
<dbReference type="InterPro" id="IPR029063">
    <property type="entry name" value="SAM-dependent_MTases_sf"/>
</dbReference>
<dbReference type="NCBIfam" id="TIGR00406">
    <property type="entry name" value="prmA"/>
    <property type="match status" value="1"/>
</dbReference>
<dbReference type="PANTHER" id="PTHR43648">
    <property type="entry name" value="ELECTRON TRANSFER FLAVOPROTEIN BETA SUBUNIT LYSINE METHYLTRANSFERASE"/>
    <property type="match status" value="1"/>
</dbReference>
<dbReference type="PANTHER" id="PTHR43648:SF1">
    <property type="entry name" value="ELECTRON TRANSFER FLAVOPROTEIN BETA SUBUNIT LYSINE METHYLTRANSFERASE"/>
    <property type="match status" value="1"/>
</dbReference>
<dbReference type="Pfam" id="PF06325">
    <property type="entry name" value="PrmA"/>
    <property type="match status" value="1"/>
</dbReference>
<dbReference type="PIRSF" id="PIRSF000401">
    <property type="entry name" value="RPL11_MTase"/>
    <property type="match status" value="1"/>
</dbReference>
<dbReference type="SUPFAM" id="SSF53335">
    <property type="entry name" value="S-adenosyl-L-methionine-dependent methyltransferases"/>
    <property type="match status" value="1"/>
</dbReference>
<evidence type="ECO:0000255" key="1">
    <source>
        <dbReference type="HAMAP-Rule" id="MF_00735"/>
    </source>
</evidence>
<gene>
    <name evidence="1" type="primary">prmA</name>
    <name type="ordered locus">ECA0258</name>
</gene>
<organism>
    <name type="scientific">Pectobacterium atrosepticum (strain SCRI 1043 / ATCC BAA-672)</name>
    <name type="common">Erwinia carotovora subsp. atroseptica</name>
    <dbReference type="NCBI Taxonomy" id="218491"/>
    <lineage>
        <taxon>Bacteria</taxon>
        <taxon>Pseudomonadati</taxon>
        <taxon>Pseudomonadota</taxon>
        <taxon>Gammaproteobacteria</taxon>
        <taxon>Enterobacterales</taxon>
        <taxon>Pectobacteriaceae</taxon>
        <taxon>Pectobacterium</taxon>
    </lineage>
</organism>
<sequence>MPWIQLKINTSGKVAEQLGDTMIESGAVSVTFQDTHDTPVFEPLPGETRLWGDTDAIALYDAETDMNAVIAMLEQEPLLGVGFKHKIEQLEDKDWEREWMDNFHPMQFGKRLWICPSWREIPDPSAVNVMLDPGLAFGTGTHPTTSLCLQWLDGLDLEGKTIIDFGCGSGILAIAALKLGAARAIGIDIDPQAIQASRDNAQRNGVSERLELYLPKDQPADLSADVVVANILAGPLRELAPLISDLPKAGGHLGLSGVLSTQADGVAEAYADKFTLDPVAEREEWCRITGQRHTS</sequence>
<keyword id="KW-0963">Cytoplasm</keyword>
<keyword id="KW-0489">Methyltransferase</keyword>
<keyword id="KW-1185">Reference proteome</keyword>
<keyword id="KW-0949">S-adenosyl-L-methionine</keyword>
<keyword id="KW-0808">Transferase</keyword>
<feature type="chain" id="PRO_0000192261" description="Ribosomal protein L11 methyltransferase">
    <location>
        <begin position="1"/>
        <end position="295"/>
    </location>
</feature>
<feature type="binding site" evidence="1">
    <location>
        <position position="145"/>
    </location>
    <ligand>
        <name>S-adenosyl-L-methionine</name>
        <dbReference type="ChEBI" id="CHEBI:59789"/>
    </ligand>
</feature>
<feature type="binding site" evidence="1">
    <location>
        <position position="166"/>
    </location>
    <ligand>
        <name>S-adenosyl-L-methionine</name>
        <dbReference type="ChEBI" id="CHEBI:59789"/>
    </ligand>
</feature>
<feature type="binding site" evidence="1">
    <location>
        <position position="188"/>
    </location>
    <ligand>
        <name>S-adenosyl-L-methionine</name>
        <dbReference type="ChEBI" id="CHEBI:59789"/>
    </ligand>
</feature>
<feature type="binding site" evidence="1">
    <location>
        <position position="230"/>
    </location>
    <ligand>
        <name>S-adenosyl-L-methionine</name>
        <dbReference type="ChEBI" id="CHEBI:59789"/>
    </ligand>
</feature>
<comment type="function">
    <text evidence="1">Methylates ribosomal protein L11.</text>
</comment>
<comment type="catalytic activity">
    <reaction evidence="1">
        <text>L-lysyl-[protein] + 3 S-adenosyl-L-methionine = N(6),N(6),N(6)-trimethyl-L-lysyl-[protein] + 3 S-adenosyl-L-homocysteine + 3 H(+)</text>
        <dbReference type="Rhea" id="RHEA:54192"/>
        <dbReference type="Rhea" id="RHEA-COMP:9752"/>
        <dbReference type="Rhea" id="RHEA-COMP:13826"/>
        <dbReference type="ChEBI" id="CHEBI:15378"/>
        <dbReference type="ChEBI" id="CHEBI:29969"/>
        <dbReference type="ChEBI" id="CHEBI:57856"/>
        <dbReference type="ChEBI" id="CHEBI:59789"/>
        <dbReference type="ChEBI" id="CHEBI:61961"/>
    </reaction>
</comment>
<comment type="subcellular location">
    <subcellularLocation>
        <location evidence="1">Cytoplasm</location>
    </subcellularLocation>
</comment>
<comment type="similarity">
    <text evidence="1">Belongs to the methyltransferase superfamily. PrmA family.</text>
</comment>
<protein>
    <recommendedName>
        <fullName evidence="1">Ribosomal protein L11 methyltransferase</fullName>
        <shortName evidence="1">L11 Mtase</shortName>
        <ecNumber evidence="1">2.1.1.-</ecNumber>
    </recommendedName>
</protein>
<accession>Q6DAJ5</accession>
<name>PRMA_PECAS</name>